<feature type="chain" id="PRO_0000179606" description="ATP-dependent Clp protease proteolytic subunit 3">
    <location>
        <begin position="1"/>
        <end position="221"/>
    </location>
</feature>
<feature type="active site" description="Nucleophile" evidence="1">
    <location>
        <position position="118"/>
    </location>
</feature>
<feature type="active site" evidence="1">
    <location>
        <position position="143"/>
    </location>
</feature>
<organism>
    <name type="scientific">Nocardia farcinica (strain IFM 10152)</name>
    <dbReference type="NCBI Taxonomy" id="247156"/>
    <lineage>
        <taxon>Bacteria</taxon>
        <taxon>Bacillati</taxon>
        <taxon>Actinomycetota</taxon>
        <taxon>Actinomycetes</taxon>
        <taxon>Mycobacteriales</taxon>
        <taxon>Nocardiaceae</taxon>
        <taxon>Nocardia</taxon>
    </lineage>
</organism>
<comment type="function">
    <text evidence="1">Cleaves peptides in various proteins in a process that requires ATP hydrolysis. Has a chymotrypsin-like activity. Plays a major role in the degradation of misfolded proteins.</text>
</comment>
<comment type="catalytic activity">
    <reaction evidence="1">
        <text>Hydrolysis of proteins to small peptides in the presence of ATP and magnesium. alpha-casein is the usual test substrate. In the absence of ATP, only oligopeptides shorter than five residues are hydrolyzed (such as succinyl-Leu-Tyr-|-NHMec, and Leu-Tyr-Leu-|-Tyr-Trp, in which cleavage of the -Tyr-|-Leu- and -Tyr-|-Trp bonds also occurs).</text>
        <dbReference type="EC" id="3.4.21.92"/>
    </reaction>
</comment>
<comment type="subunit">
    <text evidence="1">Fourteen ClpP subunits assemble into 2 heptameric rings which stack back to back to give a disk-like structure with a central cavity, resembling the structure of eukaryotic proteasomes.</text>
</comment>
<comment type="subcellular location">
    <subcellularLocation>
        <location evidence="1">Cytoplasm</location>
    </subcellularLocation>
</comment>
<comment type="similarity">
    <text evidence="1">Belongs to the peptidase S14 family.</text>
</comment>
<gene>
    <name evidence="1" type="primary">clpP3</name>
    <name type="ordered locus">NFA_13340</name>
</gene>
<evidence type="ECO:0000255" key="1">
    <source>
        <dbReference type="HAMAP-Rule" id="MF_00444"/>
    </source>
</evidence>
<proteinExistence type="inferred from homology"/>
<sequence length="221" mass="24147">MALIDPRAGLSGIAPSSPQARYILPSFIEHSSFGVKESNPYNKLFEERIIFLGVQVDDASANDIMAQLLVLESLDPDRDITMYINSPGGSFTSLMAIYDTMQYVRADVATVCLGQAASAAAVLLAAGTPGKRACLPNARVLIHQPSLEGGIQGQVSDLEIQAAEIERMRRLMETTLARHTGKDPDTIRKDTDRDKILTAEDAKEYGIIDTVFDYRKLSAQK</sequence>
<name>CLPP3_NOCFA</name>
<reference key="1">
    <citation type="journal article" date="2004" name="Proc. Natl. Acad. Sci. U.S.A.">
        <title>The complete genomic sequence of Nocardia farcinica IFM 10152.</title>
        <authorList>
            <person name="Ishikawa J."/>
            <person name="Yamashita A."/>
            <person name="Mikami Y."/>
            <person name="Hoshino Y."/>
            <person name="Kurita H."/>
            <person name="Hotta K."/>
            <person name="Shiba T."/>
            <person name="Hattori M."/>
        </authorList>
    </citation>
    <scope>NUCLEOTIDE SEQUENCE [LARGE SCALE GENOMIC DNA]</scope>
    <source>
        <strain>IFM 10152</strain>
    </source>
</reference>
<dbReference type="EC" id="3.4.21.92" evidence="1"/>
<dbReference type="EMBL" id="AP006618">
    <property type="protein sequence ID" value="BAD56179.1"/>
    <property type="molecule type" value="Genomic_DNA"/>
</dbReference>
<dbReference type="RefSeq" id="WP_011207864.1">
    <property type="nucleotide sequence ID" value="NC_006361.1"/>
</dbReference>
<dbReference type="SMR" id="Q5Z062"/>
<dbReference type="STRING" id="247156.NFA_13340"/>
<dbReference type="MEROPS" id="S14.009"/>
<dbReference type="GeneID" id="61132156"/>
<dbReference type="KEGG" id="nfa:NFA_13340"/>
<dbReference type="eggNOG" id="COG0740">
    <property type="taxonomic scope" value="Bacteria"/>
</dbReference>
<dbReference type="HOGENOM" id="CLU_058707_3_2_11"/>
<dbReference type="OrthoDB" id="9802800at2"/>
<dbReference type="Proteomes" id="UP000006820">
    <property type="component" value="Chromosome"/>
</dbReference>
<dbReference type="GO" id="GO:0005737">
    <property type="term" value="C:cytoplasm"/>
    <property type="evidence" value="ECO:0007669"/>
    <property type="project" value="UniProtKB-SubCell"/>
</dbReference>
<dbReference type="GO" id="GO:0009368">
    <property type="term" value="C:endopeptidase Clp complex"/>
    <property type="evidence" value="ECO:0007669"/>
    <property type="project" value="TreeGrafter"/>
</dbReference>
<dbReference type="GO" id="GO:0004176">
    <property type="term" value="F:ATP-dependent peptidase activity"/>
    <property type="evidence" value="ECO:0007669"/>
    <property type="project" value="InterPro"/>
</dbReference>
<dbReference type="GO" id="GO:0051117">
    <property type="term" value="F:ATPase binding"/>
    <property type="evidence" value="ECO:0007669"/>
    <property type="project" value="TreeGrafter"/>
</dbReference>
<dbReference type="GO" id="GO:0004252">
    <property type="term" value="F:serine-type endopeptidase activity"/>
    <property type="evidence" value="ECO:0007669"/>
    <property type="project" value="UniProtKB-UniRule"/>
</dbReference>
<dbReference type="GO" id="GO:0006515">
    <property type="term" value="P:protein quality control for misfolded or incompletely synthesized proteins"/>
    <property type="evidence" value="ECO:0007669"/>
    <property type="project" value="TreeGrafter"/>
</dbReference>
<dbReference type="CDD" id="cd07017">
    <property type="entry name" value="S14_ClpP_2"/>
    <property type="match status" value="1"/>
</dbReference>
<dbReference type="FunFam" id="3.90.226.10:FF:000002">
    <property type="entry name" value="ATP-dependent Clp protease proteolytic subunit"/>
    <property type="match status" value="1"/>
</dbReference>
<dbReference type="Gene3D" id="3.90.226.10">
    <property type="entry name" value="2-enoyl-CoA Hydratase, Chain A, domain 1"/>
    <property type="match status" value="1"/>
</dbReference>
<dbReference type="HAMAP" id="MF_00444">
    <property type="entry name" value="ClpP"/>
    <property type="match status" value="1"/>
</dbReference>
<dbReference type="InterPro" id="IPR001907">
    <property type="entry name" value="ClpP"/>
</dbReference>
<dbReference type="InterPro" id="IPR029045">
    <property type="entry name" value="ClpP/crotonase-like_dom_sf"/>
</dbReference>
<dbReference type="InterPro" id="IPR023562">
    <property type="entry name" value="ClpP/TepA"/>
</dbReference>
<dbReference type="InterPro" id="IPR033135">
    <property type="entry name" value="ClpP_His_AS"/>
</dbReference>
<dbReference type="InterPro" id="IPR018215">
    <property type="entry name" value="ClpP_Ser_AS"/>
</dbReference>
<dbReference type="NCBIfam" id="NF001368">
    <property type="entry name" value="PRK00277.1"/>
    <property type="match status" value="1"/>
</dbReference>
<dbReference type="NCBIfam" id="NF009205">
    <property type="entry name" value="PRK12553.1"/>
    <property type="match status" value="1"/>
</dbReference>
<dbReference type="PANTHER" id="PTHR10381">
    <property type="entry name" value="ATP-DEPENDENT CLP PROTEASE PROTEOLYTIC SUBUNIT"/>
    <property type="match status" value="1"/>
</dbReference>
<dbReference type="PANTHER" id="PTHR10381:SF26">
    <property type="entry name" value="ATP-DEPENDENT CLP PROTEASE PROTEOLYTIC SUBUNIT-LIKE-RELATED"/>
    <property type="match status" value="1"/>
</dbReference>
<dbReference type="Pfam" id="PF00574">
    <property type="entry name" value="CLP_protease"/>
    <property type="match status" value="1"/>
</dbReference>
<dbReference type="PRINTS" id="PR00127">
    <property type="entry name" value="CLPPROTEASEP"/>
</dbReference>
<dbReference type="SUPFAM" id="SSF52096">
    <property type="entry name" value="ClpP/crotonase"/>
    <property type="match status" value="1"/>
</dbReference>
<dbReference type="PROSITE" id="PS00382">
    <property type="entry name" value="CLP_PROTEASE_HIS"/>
    <property type="match status" value="1"/>
</dbReference>
<dbReference type="PROSITE" id="PS00381">
    <property type="entry name" value="CLP_PROTEASE_SER"/>
    <property type="match status" value="1"/>
</dbReference>
<accession>Q5Z062</accession>
<keyword id="KW-0963">Cytoplasm</keyword>
<keyword id="KW-0378">Hydrolase</keyword>
<keyword id="KW-0645">Protease</keyword>
<keyword id="KW-1185">Reference proteome</keyword>
<keyword id="KW-0720">Serine protease</keyword>
<protein>
    <recommendedName>
        <fullName evidence="1">ATP-dependent Clp protease proteolytic subunit 3</fullName>
        <ecNumber evidence="1">3.4.21.92</ecNumber>
    </recommendedName>
    <alternativeName>
        <fullName evidence="1">Endopeptidase Clp 3</fullName>
    </alternativeName>
</protein>